<accession>A0A182BSS0</accession>
<evidence type="ECO:0000255" key="1"/>
<evidence type="ECO:0000269" key="2">
    <source>
    </source>
</evidence>
<evidence type="ECO:0000269" key="3">
    <source ref="2"/>
</evidence>
<evidence type="ECO:0000303" key="4">
    <source ref="2"/>
</evidence>
<evidence type="ECO:0000305" key="5"/>
<evidence type="ECO:0000305" key="6">
    <source ref="2"/>
</evidence>
<reference key="1">
    <citation type="journal article" date="2016" name="Front. Microbiol.">
        <title>Studying the mechanism of Plasmopara viticola RxLR effectors on suppressing plant immunity.</title>
        <authorList>
            <person name="Xiang J."/>
            <person name="Li X."/>
            <person name="Wu J."/>
            <person name="Yin L."/>
            <person name="Zhang Y."/>
            <person name="Lu J."/>
        </authorList>
    </citation>
    <scope>NUCLEOTIDE SEQUENCE [MRNA]</scope>
    <scope>INDUCTION</scope>
    <scope>FUNCTION</scope>
    <scope>SUBCELLULAR LOCATION</scope>
    <source>
        <strain>ZJ-1-1</strain>
    </source>
</reference>
<reference key="2">
    <citation type="journal article" date="2015" name="Physiol. Mol. Plant Pathol.">
        <title>Characterization of the secretome of Plasmopara viticola by de novo transcriptome analysis.</title>
        <authorList>
            <person name="Yin L."/>
            <person name="Li X."/>
            <person name="Xiang J."/>
            <person name="Qu J."/>
            <person name="Zhang Y."/>
            <person name="Dry I.B."/>
            <person name="Lu J."/>
        </authorList>
    </citation>
    <scope>IDENTIFICATION</scope>
    <scope>INDUCTION</scope>
    <scope>DOMAIN</scope>
</reference>
<dbReference type="EMBL" id="KX010953">
    <property type="protein sequence ID" value="ANC73373.1"/>
    <property type="molecule type" value="mRNA"/>
</dbReference>
<dbReference type="SMR" id="A0A182BSS0"/>
<dbReference type="GO" id="GO:0005576">
    <property type="term" value="C:extracellular region"/>
    <property type="evidence" value="ECO:0007669"/>
    <property type="project" value="UniProtKB-SubCell"/>
</dbReference>
<dbReference type="GO" id="GO:0030430">
    <property type="term" value="C:host cell cytoplasm"/>
    <property type="evidence" value="ECO:0007669"/>
    <property type="project" value="UniProtKB-SubCell"/>
</dbReference>
<dbReference type="GO" id="GO:0042025">
    <property type="term" value="C:host cell nucleus"/>
    <property type="evidence" value="ECO:0007669"/>
    <property type="project" value="UniProtKB-SubCell"/>
</dbReference>
<protein>
    <recommendedName>
        <fullName evidence="4">Secreted RxLR effector protein 17</fullName>
    </recommendedName>
</protein>
<proteinExistence type="evidence at transcript level"/>
<feature type="signal peptide" evidence="1">
    <location>
        <begin position="1"/>
        <end position="24"/>
    </location>
</feature>
<feature type="chain" id="PRO_5008116109" description="Secreted RxLR effector protein 17">
    <location>
        <begin position="25"/>
        <end position="149"/>
    </location>
</feature>
<feature type="short sequence motif" description="RxLR-dEER" evidence="6">
    <location>
        <begin position="52"/>
        <end position="78"/>
    </location>
</feature>
<name>RLR17_PLAVT</name>
<keyword id="KW-1035">Host cytoplasm</keyword>
<keyword id="KW-1048">Host nucleus</keyword>
<keyword id="KW-0964">Secreted</keyword>
<keyword id="KW-0732">Signal</keyword>
<keyword id="KW-0843">Virulence</keyword>
<comment type="function">
    <text evidence="2">Effector that acts as a broad suppressor of cell death to interrupt plant immunity. Inhibits cell death induced by cell death-inducing proteins, including the PAMP elicitor INF1 from P.infestans.</text>
</comment>
<comment type="subcellular location">
    <subcellularLocation>
        <location evidence="2">Secreted</location>
    </subcellularLocation>
    <subcellularLocation>
        <location evidence="2">Host cytoplasm</location>
    </subcellularLocation>
    <subcellularLocation>
        <location evidence="2">Host nucleus</location>
    </subcellularLocation>
</comment>
<comment type="induction">
    <text evidence="2 3">Expression is up-regulated at later stages of infection.</text>
</comment>
<comment type="domain">
    <text evidence="6">The RxLR-dEER motif acts to carry the protein into the host cell cytoplasm through binding to cell surface phosphatidylinositol-3-phosphate.</text>
</comment>
<comment type="similarity">
    <text evidence="5">Belongs to the RxLR effector family.</text>
</comment>
<sequence>MRLFYFSAMSVIGLLARNNMVVVASDKPITAVETLGNPVHLHHEVVESGLVRSLRTREKDIQDSTVAKDDAIKVEEDRSSLIQTINTPRYAYWFSQQMTPLDVRRELHLPAHKLQAKPSKVYSGYVEYYNIHCSFFKYRDEPFCCVKEY</sequence>
<gene>
    <name evidence="4" type="primary">RxLR17</name>
</gene>
<organism>
    <name type="scientific">Plasmopara viticola</name>
    <name type="common">Downy mildew of grapevine</name>
    <name type="synonym">Botrytis viticola</name>
    <dbReference type="NCBI Taxonomy" id="143451"/>
    <lineage>
        <taxon>Eukaryota</taxon>
        <taxon>Sar</taxon>
        <taxon>Stramenopiles</taxon>
        <taxon>Oomycota</taxon>
        <taxon>Peronosporales</taxon>
        <taxon>Peronosporaceae</taxon>
        <taxon>Plasmopara</taxon>
    </lineage>
</organism>